<name>V044_FOWPN</name>
<accession>Q9J5F9</accession>
<accession>Q67478</accession>
<accession>Q67479</accession>
<feature type="chain" id="PRO_0000094156" description="Uncharacterized serpin-like protein FPV044">
    <location>
        <begin position="1"/>
        <end position="358"/>
    </location>
</feature>
<sequence length="358" mass="41441">MSNVSSINNKLAFISTKFYELITKRIPDKNIVISPPSIMLIVKMLLKASTDRSRNQLLDLLYMLPLDDDEDDDSNTDKILKELLSRTEYTSIFFIDHNKRIHDSYKKYVSKSNITSLVSGDVTVLCNKMSELNYNTEDMLSSIRKPPEASILFNIKYSDLWESPFSDNDSHKFFVTKYLTKVVPYIITSGMFGHMYCHEIKSNIINIPYLHNTYSMLLFFADTYKNFKYLEKHITPRILLSSKIGVSNMKYSEISVSIPKFSIQTQHNIKSVFVELGITDIFDENCSMKSVSPDKFSITSLFVKSQVDFINNKIVLGDQKKWEKISNNNYHINRPFIFVIKYNKTGSVVFMGKIKDPE</sequence>
<evidence type="ECO:0000305" key="1"/>
<protein>
    <recommendedName>
        <fullName>Uncharacterized serpin-like protein FPV044</fullName>
    </recommendedName>
</protein>
<organism>
    <name type="scientific">Fowlpox virus (strain NVSL)</name>
    <name type="common">FPV</name>
    <dbReference type="NCBI Taxonomy" id="928301"/>
    <lineage>
        <taxon>Viruses</taxon>
        <taxon>Varidnaviria</taxon>
        <taxon>Bamfordvirae</taxon>
        <taxon>Nucleocytoviricota</taxon>
        <taxon>Pokkesviricetes</taxon>
        <taxon>Chitovirales</taxon>
        <taxon>Poxviridae</taxon>
        <taxon>Chordopoxvirinae</taxon>
        <taxon>Avipoxvirus</taxon>
        <taxon>Fowlpox virus</taxon>
    </lineage>
</organism>
<keyword id="KW-0646">Protease inhibitor</keyword>
<keyword id="KW-1185">Reference proteome</keyword>
<keyword id="KW-0722">Serine protease inhibitor</keyword>
<reference key="1">
    <citation type="journal article" date="1994" name="J. Gen. Virol.">
        <title>Deletion of fowlpox virus homologues of vaccinia virus genes between the 3 beta-hydroxysteroid dehydrogenase (A44L) and DNA ligase (A50R) genes.</title>
        <authorList>
            <person name="Skinner M.A."/>
            <person name="Moore J.B."/>
            <person name="Binns M.M."/>
            <person name="Smith G.L."/>
            <person name="Boursnell M.E.G."/>
        </authorList>
    </citation>
    <scope>NUCLEOTIDE SEQUENCE [GENOMIC DNA]</scope>
    <source>
        <strain>FP-9 / Isolate HP-438</strain>
    </source>
</reference>
<reference key="2">
    <citation type="journal article" date="2000" name="J. Virol.">
        <title>The genome of fowlpox virus.</title>
        <authorList>
            <person name="Afonso C.L."/>
            <person name="Tulman E.R."/>
            <person name="Lu Z."/>
            <person name="Zsak L."/>
            <person name="Kutish G.F."/>
            <person name="Rock D.L."/>
        </authorList>
    </citation>
    <scope>NUCLEOTIDE SEQUENCE [LARGE SCALE GENOMIC DNA]</scope>
</reference>
<comment type="similarity">
    <text evidence="1">Belongs to the serpin family. Poxviruses subfamily.</text>
</comment>
<comment type="sequence caution" evidence="1">
    <conflict type="frameshift">
        <sequence resource="EMBL-CDS" id="CAA82803"/>
    </conflict>
</comment>
<comment type="sequence caution" evidence="1">
    <conflict type="frameshift">
        <sequence resource="EMBL-CDS" id="CAA82804"/>
    </conflict>
</comment>
<organismHost>
    <name type="scientific">Vertebrata</name>
    <dbReference type="NCBI Taxonomy" id="7742"/>
</organismHost>
<proteinExistence type="inferred from homology"/>
<gene>
    <name type="ordered locus">FPV044</name>
</gene>
<dbReference type="EMBL" id="Z29716">
    <property type="protein sequence ID" value="CAA82803.1"/>
    <property type="status" value="ALT_FRAME"/>
    <property type="molecule type" value="Genomic_DNA"/>
</dbReference>
<dbReference type="EMBL" id="Z29716">
    <property type="protein sequence ID" value="CAA82804.1"/>
    <property type="status" value="ALT_FRAME"/>
    <property type="molecule type" value="Genomic_DNA"/>
</dbReference>
<dbReference type="EMBL" id="AF198100">
    <property type="protein sequence ID" value="AAF44388.1"/>
    <property type="molecule type" value="Genomic_DNA"/>
</dbReference>
<dbReference type="PIR" id="S41972">
    <property type="entry name" value="S41972"/>
</dbReference>
<dbReference type="PIR" id="S41973">
    <property type="entry name" value="S41973"/>
</dbReference>
<dbReference type="RefSeq" id="NP_039007.1">
    <property type="nucleotide sequence ID" value="NC_002188.1"/>
</dbReference>
<dbReference type="SMR" id="Q9J5F9"/>
<dbReference type="GeneID" id="1486592"/>
<dbReference type="KEGG" id="vg:1486592"/>
<dbReference type="Proteomes" id="UP000008597">
    <property type="component" value="Segment"/>
</dbReference>
<dbReference type="GO" id="GO:0005615">
    <property type="term" value="C:extracellular space"/>
    <property type="evidence" value="ECO:0007669"/>
    <property type="project" value="InterPro"/>
</dbReference>
<dbReference type="GO" id="GO:0004867">
    <property type="term" value="F:serine-type endopeptidase inhibitor activity"/>
    <property type="evidence" value="ECO:0007669"/>
    <property type="project" value="UniProtKB-KW"/>
</dbReference>
<dbReference type="CDD" id="cd19585">
    <property type="entry name" value="serpin_poxvirus"/>
    <property type="match status" value="1"/>
</dbReference>
<dbReference type="Gene3D" id="2.30.39.10">
    <property type="entry name" value="Alpha-1-antitrypsin, domain 1"/>
    <property type="match status" value="1"/>
</dbReference>
<dbReference type="Gene3D" id="3.30.497.10">
    <property type="entry name" value="Antithrombin, subunit I, domain 2"/>
    <property type="match status" value="1"/>
</dbReference>
<dbReference type="InterPro" id="IPR023795">
    <property type="entry name" value="Serpin_CS"/>
</dbReference>
<dbReference type="InterPro" id="IPR023796">
    <property type="entry name" value="Serpin_dom"/>
</dbReference>
<dbReference type="InterPro" id="IPR000215">
    <property type="entry name" value="Serpin_fam"/>
</dbReference>
<dbReference type="InterPro" id="IPR036186">
    <property type="entry name" value="Serpin_sf"/>
</dbReference>
<dbReference type="InterPro" id="IPR042178">
    <property type="entry name" value="Serpin_sf_1"/>
</dbReference>
<dbReference type="InterPro" id="IPR042185">
    <property type="entry name" value="Serpin_sf_2"/>
</dbReference>
<dbReference type="PANTHER" id="PTHR11461:SF211">
    <property type="entry name" value="GH10112P-RELATED"/>
    <property type="match status" value="1"/>
</dbReference>
<dbReference type="PANTHER" id="PTHR11461">
    <property type="entry name" value="SERINE PROTEASE INHIBITOR, SERPIN"/>
    <property type="match status" value="1"/>
</dbReference>
<dbReference type="Pfam" id="PF00079">
    <property type="entry name" value="Serpin"/>
    <property type="match status" value="1"/>
</dbReference>
<dbReference type="SMART" id="SM00093">
    <property type="entry name" value="SERPIN"/>
    <property type="match status" value="1"/>
</dbReference>
<dbReference type="SUPFAM" id="SSF56574">
    <property type="entry name" value="Serpins"/>
    <property type="match status" value="1"/>
</dbReference>
<dbReference type="PROSITE" id="PS00284">
    <property type="entry name" value="SERPIN"/>
    <property type="match status" value="1"/>
</dbReference>